<proteinExistence type="inferred from homology"/>
<reference key="1">
    <citation type="journal article" date="2002" name="Science">
        <title>50 million years of genomic stasis in endosymbiotic bacteria.</title>
        <authorList>
            <person name="Tamas I."/>
            <person name="Klasson L."/>
            <person name="Canbaeck B."/>
            <person name="Naeslund A.K."/>
            <person name="Eriksson A.-S."/>
            <person name="Wernegreen J.J."/>
            <person name="Sandstroem J.P."/>
            <person name="Moran N.A."/>
            <person name="Andersson S.G.E."/>
        </authorList>
    </citation>
    <scope>NUCLEOTIDE SEQUENCE [LARGE SCALE GENOMIC DNA]</scope>
    <source>
        <strain>Sg</strain>
    </source>
</reference>
<name>RLMN_BUCAP</name>
<gene>
    <name evidence="1" type="primary">rlmN</name>
    <name type="ordered locus">BUsg_275</name>
</gene>
<keyword id="KW-0004">4Fe-4S</keyword>
<keyword id="KW-0963">Cytoplasm</keyword>
<keyword id="KW-1015">Disulfide bond</keyword>
<keyword id="KW-0408">Iron</keyword>
<keyword id="KW-0411">Iron-sulfur</keyword>
<keyword id="KW-0479">Metal-binding</keyword>
<keyword id="KW-0489">Methyltransferase</keyword>
<keyword id="KW-0698">rRNA processing</keyword>
<keyword id="KW-0949">S-adenosyl-L-methionine</keyword>
<keyword id="KW-0808">Transferase</keyword>
<keyword id="KW-0819">tRNA processing</keyword>
<protein>
    <recommendedName>
        <fullName evidence="1">Dual-specificity RNA methyltransferase RlmN</fullName>
        <ecNumber evidence="1">2.1.1.192</ecNumber>
    </recommendedName>
    <alternativeName>
        <fullName evidence="1">23S rRNA (adenine(2503)-C(2))-methyltransferase</fullName>
    </alternativeName>
    <alternativeName>
        <fullName evidence="1">23S rRNA m2A2503 methyltransferase</fullName>
    </alternativeName>
    <alternativeName>
        <fullName evidence="1">Ribosomal RNA large subunit methyltransferase N</fullName>
    </alternativeName>
    <alternativeName>
        <fullName evidence="1">tRNA (adenine(37)-C(2))-methyltransferase</fullName>
    </alternativeName>
    <alternativeName>
        <fullName evidence="1">tRNA m2A37 methyltransferase</fullName>
    </alternativeName>
</protein>
<sequence>MHKSINIKNISDDKINLLDLNRKEIEIFLLSLGAKKFVTDQLMKWIYNRHCNNFNLMSNLKKDIRKKLNERSYIFASNFIEEKISYDGTVKWITSIDKQKIETIYIPEKKRATLCVSSQIGCSLKCKFCATGQQGFNRNLKVSEIISQIWQANKILKEKKNNSTITNIVFMGMGEPLLNLNNVISAIKIILDKNGFGLSKRRITLSTSGIVPALNKLIKKIDVSLAISLHAPNDFIRNSIMPINMKYNIKSFLNSVSKYLKHSHANRGGVTVEYVMLRGINDLNEHAEELGNILKKIPSKINLIPWNFFKNANFICSSKNRINIFANILRKKGFNTTIRKNRGQDIGAACGQLTGDIVNRIKN</sequence>
<comment type="function">
    <text evidence="1">Specifically methylates position 2 of adenine 2503 in 23S rRNA and position 2 of adenine 37 in tRNAs. m2A2503 modification seems to play a crucial role in the proofreading step occurring at the peptidyl transferase center and thus would serve to optimize ribosomal fidelity.</text>
</comment>
<comment type="catalytic activity">
    <reaction evidence="1">
        <text>adenosine(2503) in 23S rRNA + 2 reduced [2Fe-2S]-[ferredoxin] + 2 S-adenosyl-L-methionine = 2-methyladenosine(2503) in 23S rRNA + 5'-deoxyadenosine + L-methionine + 2 oxidized [2Fe-2S]-[ferredoxin] + S-adenosyl-L-homocysteine</text>
        <dbReference type="Rhea" id="RHEA:42916"/>
        <dbReference type="Rhea" id="RHEA-COMP:10000"/>
        <dbReference type="Rhea" id="RHEA-COMP:10001"/>
        <dbReference type="Rhea" id="RHEA-COMP:10152"/>
        <dbReference type="Rhea" id="RHEA-COMP:10282"/>
        <dbReference type="ChEBI" id="CHEBI:17319"/>
        <dbReference type="ChEBI" id="CHEBI:33737"/>
        <dbReference type="ChEBI" id="CHEBI:33738"/>
        <dbReference type="ChEBI" id="CHEBI:57844"/>
        <dbReference type="ChEBI" id="CHEBI:57856"/>
        <dbReference type="ChEBI" id="CHEBI:59789"/>
        <dbReference type="ChEBI" id="CHEBI:74411"/>
        <dbReference type="ChEBI" id="CHEBI:74497"/>
        <dbReference type="EC" id="2.1.1.192"/>
    </reaction>
</comment>
<comment type="catalytic activity">
    <reaction evidence="1">
        <text>adenosine(37) in tRNA + 2 reduced [2Fe-2S]-[ferredoxin] + 2 S-adenosyl-L-methionine = 2-methyladenosine(37) in tRNA + 5'-deoxyadenosine + L-methionine + 2 oxidized [2Fe-2S]-[ferredoxin] + S-adenosyl-L-homocysteine</text>
        <dbReference type="Rhea" id="RHEA:43332"/>
        <dbReference type="Rhea" id="RHEA-COMP:10000"/>
        <dbReference type="Rhea" id="RHEA-COMP:10001"/>
        <dbReference type="Rhea" id="RHEA-COMP:10162"/>
        <dbReference type="Rhea" id="RHEA-COMP:10485"/>
        <dbReference type="ChEBI" id="CHEBI:17319"/>
        <dbReference type="ChEBI" id="CHEBI:33737"/>
        <dbReference type="ChEBI" id="CHEBI:33738"/>
        <dbReference type="ChEBI" id="CHEBI:57844"/>
        <dbReference type="ChEBI" id="CHEBI:57856"/>
        <dbReference type="ChEBI" id="CHEBI:59789"/>
        <dbReference type="ChEBI" id="CHEBI:74411"/>
        <dbReference type="ChEBI" id="CHEBI:74497"/>
        <dbReference type="EC" id="2.1.1.192"/>
    </reaction>
</comment>
<comment type="cofactor">
    <cofactor evidence="1">
        <name>[4Fe-4S] cluster</name>
        <dbReference type="ChEBI" id="CHEBI:49883"/>
    </cofactor>
    <text evidence="1">Binds 1 [4Fe-4S] cluster. The cluster is coordinated with 3 cysteines and an exchangeable S-adenosyl-L-methionine.</text>
</comment>
<comment type="subcellular location">
    <subcellularLocation>
        <location evidence="1">Cytoplasm</location>
    </subcellularLocation>
</comment>
<comment type="miscellaneous">
    <text evidence="1">Reaction proceeds by a ping-pong mechanism involving intermediate methylation of a conserved cysteine residue.</text>
</comment>
<comment type="similarity">
    <text evidence="1">Belongs to the radical SAM superfamily. RlmN family.</text>
</comment>
<organism>
    <name type="scientific">Buchnera aphidicola subsp. Schizaphis graminum (strain Sg)</name>
    <dbReference type="NCBI Taxonomy" id="198804"/>
    <lineage>
        <taxon>Bacteria</taxon>
        <taxon>Pseudomonadati</taxon>
        <taxon>Pseudomonadota</taxon>
        <taxon>Gammaproteobacteria</taxon>
        <taxon>Enterobacterales</taxon>
        <taxon>Erwiniaceae</taxon>
        <taxon>Buchnera</taxon>
    </lineage>
</organism>
<feature type="chain" id="PRO_0000171923" description="Dual-specificity RNA methyltransferase RlmN">
    <location>
        <begin position="1"/>
        <end position="363"/>
    </location>
</feature>
<feature type="domain" description="Radical SAM core" evidence="2">
    <location>
        <begin position="108"/>
        <end position="349"/>
    </location>
</feature>
<feature type="active site" description="Proton acceptor" evidence="1">
    <location>
        <position position="102"/>
    </location>
</feature>
<feature type="active site" description="S-methylcysteine intermediate" evidence="1">
    <location>
        <position position="350"/>
    </location>
</feature>
<feature type="binding site" evidence="1">
    <location>
        <position position="122"/>
    </location>
    <ligand>
        <name>[4Fe-4S] cluster</name>
        <dbReference type="ChEBI" id="CHEBI:49883"/>
        <note>4Fe-4S-S-AdoMet</note>
    </ligand>
</feature>
<feature type="binding site" evidence="1">
    <location>
        <position position="126"/>
    </location>
    <ligand>
        <name>[4Fe-4S] cluster</name>
        <dbReference type="ChEBI" id="CHEBI:49883"/>
        <note>4Fe-4S-S-AdoMet</note>
    </ligand>
</feature>
<feature type="binding site" evidence="1">
    <location>
        <position position="129"/>
    </location>
    <ligand>
        <name>[4Fe-4S] cluster</name>
        <dbReference type="ChEBI" id="CHEBI:49883"/>
        <note>4Fe-4S-S-AdoMet</note>
    </ligand>
</feature>
<feature type="binding site" evidence="1">
    <location>
        <begin position="174"/>
        <end position="175"/>
    </location>
    <ligand>
        <name>S-adenosyl-L-methionine</name>
        <dbReference type="ChEBI" id="CHEBI:59789"/>
    </ligand>
</feature>
<feature type="binding site" evidence="1">
    <location>
        <position position="206"/>
    </location>
    <ligand>
        <name>S-adenosyl-L-methionine</name>
        <dbReference type="ChEBI" id="CHEBI:59789"/>
    </ligand>
</feature>
<feature type="binding site" evidence="1">
    <location>
        <begin position="228"/>
        <end position="230"/>
    </location>
    <ligand>
        <name>S-adenosyl-L-methionine</name>
        <dbReference type="ChEBI" id="CHEBI:59789"/>
    </ligand>
</feature>
<feature type="binding site" evidence="1">
    <location>
        <position position="307"/>
    </location>
    <ligand>
        <name>S-adenosyl-L-methionine</name>
        <dbReference type="ChEBI" id="CHEBI:59789"/>
    </ligand>
</feature>
<feature type="disulfide bond" description="(transient)" evidence="1">
    <location>
        <begin position="115"/>
        <end position="350"/>
    </location>
</feature>
<evidence type="ECO:0000255" key="1">
    <source>
        <dbReference type="HAMAP-Rule" id="MF_01849"/>
    </source>
</evidence>
<evidence type="ECO:0000255" key="2">
    <source>
        <dbReference type="PROSITE-ProRule" id="PRU01266"/>
    </source>
</evidence>
<accession>Q8K9P5</accession>
<dbReference type="EC" id="2.1.1.192" evidence="1"/>
<dbReference type="EMBL" id="AE013218">
    <property type="protein sequence ID" value="AAM67833.1"/>
    <property type="molecule type" value="Genomic_DNA"/>
</dbReference>
<dbReference type="RefSeq" id="WP_011053800.1">
    <property type="nucleotide sequence ID" value="NC_004061.1"/>
</dbReference>
<dbReference type="SMR" id="Q8K9P5"/>
<dbReference type="STRING" id="198804.BUsg_275"/>
<dbReference type="GeneID" id="93003745"/>
<dbReference type="KEGG" id="bas:BUsg_275"/>
<dbReference type="eggNOG" id="COG0820">
    <property type="taxonomic scope" value="Bacteria"/>
</dbReference>
<dbReference type="HOGENOM" id="CLU_029101_0_0_6"/>
<dbReference type="Proteomes" id="UP000000416">
    <property type="component" value="Chromosome"/>
</dbReference>
<dbReference type="GO" id="GO:0005737">
    <property type="term" value="C:cytoplasm"/>
    <property type="evidence" value="ECO:0007669"/>
    <property type="project" value="UniProtKB-SubCell"/>
</dbReference>
<dbReference type="GO" id="GO:0051539">
    <property type="term" value="F:4 iron, 4 sulfur cluster binding"/>
    <property type="evidence" value="ECO:0007669"/>
    <property type="project" value="UniProtKB-UniRule"/>
</dbReference>
<dbReference type="GO" id="GO:0046872">
    <property type="term" value="F:metal ion binding"/>
    <property type="evidence" value="ECO:0007669"/>
    <property type="project" value="UniProtKB-KW"/>
</dbReference>
<dbReference type="GO" id="GO:0070040">
    <property type="term" value="F:rRNA (adenine(2503)-C2-)-methyltransferase activity"/>
    <property type="evidence" value="ECO:0007669"/>
    <property type="project" value="UniProtKB-UniRule"/>
</dbReference>
<dbReference type="GO" id="GO:0019843">
    <property type="term" value="F:rRNA binding"/>
    <property type="evidence" value="ECO:0007669"/>
    <property type="project" value="UniProtKB-UniRule"/>
</dbReference>
<dbReference type="GO" id="GO:0002935">
    <property type="term" value="F:tRNA (adenine(37)-C2)-methyltransferase activity"/>
    <property type="evidence" value="ECO:0007669"/>
    <property type="project" value="UniProtKB-UniRule"/>
</dbReference>
<dbReference type="GO" id="GO:0000049">
    <property type="term" value="F:tRNA binding"/>
    <property type="evidence" value="ECO:0007669"/>
    <property type="project" value="UniProtKB-UniRule"/>
</dbReference>
<dbReference type="GO" id="GO:0070475">
    <property type="term" value="P:rRNA base methylation"/>
    <property type="evidence" value="ECO:0007669"/>
    <property type="project" value="UniProtKB-UniRule"/>
</dbReference>
<dbReference type="GO" id="GO:0030488">
    <property type="term" value="P:tRNA methylation"/>
    <property type="evidence" value="ECO:0007669"/>
    <property type="project" value="UniProtKB-UniRule"/>
</dbReference>
<dbReference type="CDD" id="cd01335">
    <property type="entry name" value="Radical_SAM"/>
    <property type="match status" value="1"/>
</dbReference>
<dbReference type="FunFam" id="3.20.20.70:FF:000008">
    <property type="entry name" value="Dual-specificity RNA methyltransferase RlmN"/>
    <property type="match status" value="1"/>
</dbReference>
<dbReference type="Gene3D" id="1.10.150.530">
    <property type="match status" value="1"/>
</dbReference>
<dbReference type="Gene3D" id="3.20.20.70">
    <property type="entry name" value="Aldolase class I"/>
    <property type="match status" value="1"/>
</dbReference>
<dbReference type="HAMAP" id="MF_01849">
    <property type="entry name" value="RNA_methyltr_RlmN"/>
    <property type="match status" value="1"/>
</dbReference>
<dbReference type="InterPro" id="IPR013785">
    <property type="entry name" value="Aldolase_TIM"/>
</dbReference>
<dbReference type="InterPro" id="IPR040072">
    <property type="entry name" value="Methyltransferase_A"/>
</dbReference>
<dbReference type="InterPro" id="IPR048641">
    <property type="entry name" value="RlmN_N"/>
</dbReference>
<dbReference type="InterPro" id="IPR027492">
    <property type="entry name" value="RNA_MTrfase_RlmN"/>
</dbReference>
<dbReference type="InterPro" id="IPR004383">
    <property type="entry name" value="rRNA_lsu_MTrfase_RlmN/Cfr"/>
</dbReference>
<dbReference type="InterPro" id="IPR007197">
    <property type="entry name" value="rSAM"/>
</dbReference>
<dbReference type="NCBIfam" id="TIGR00048">
    <property type="entry name" value="rRNA_mod_RlmN"/>
    <property type="match status" value="1"/>
</dbReference>
<dbReference type="PANTHER" id="PTHR30544">
    <property type="entry name" value="23S RRNA METHYLTRANSFERASE"/>
    <property type="match status" value="1"/>
</dbReference>
<dbReference type="PANTHER" id="PTHR30544:SF5">
    <property type="entry name" value="RADICAL SAM CORE DOMAIN-CONTAINING PROTEIN"/>
    <property type="match status" value="1"/>
</dbReference>
<dbReference type="Pfam" id="PF04055">
    <property type="entry name" value="Radical_SAM"/>
    <property type="match status" value="1"/>
</dbReference>
<dbReference type="Pfam" id="PF21016">
    <property type="entry name" value="RlmN_N"/>
    <property type="match status" value="1"/>
</dbReference>
<dbReference type="PIRSF" id="PIRSF006004">
    <property type="entry name" value="CHP00048"/>
    <property type="match status" value="1"/>
</dbReference>
<dbReference type="SFLD" id="SFLDF00275">
    <property type="entry name" value="adenosine_C2_methyltransferase"/>
    <property type="match status" value="1"/>
</dbReference>
<dbReference type="SFLD" id="SFLDG01062">
    <property type="entry name" value="methyltransferase_(Class_A)"/>
    <property type="match status" value="1"/>
</dbReference>
<dbReference type="SUPFAM" id="SSF102114">
    <property type="entry name" value="Radical SAM enzymes"/>
    <property type="match status" value="1"/>
</dbReference>
<dbReference type="PROSITE" id="PS51918">
    <property type="entry name" value="RADICAL_SAM"/>
    <property type="match status" value="1"/>
</dbReference>